<sequence length="523" mass="57284">MSQQVIIFDTTLRDGEQALQASLSVKEKLQIALALERMGVDVMEVGFPVSSPGDFESVQTIARQVKNSRVCALARCVEKDIDVAAESLKVAEAFRIHTFIATSPMHIATKLRSTLDEVIERAIYMVKRARNYTDDVEFSCEDAGRTPIADLARVVEAAINAGATTINIPDTVGYTMPFEFAGIISGLYERVPNIDKAIISVHTHDDLGLAVGNSLAAVHAGARQVEGAMNGIGERAGNCSLEEVIMAIKVRKDILNVHTAINHQEIWRTSQLVSQICNMPIPANKAIVGSGAFAHSSGIHQDGVLKNRENYEIMTPESIGLNQIQLNLTSRSGRAAVKHRMDEMGYKESEYNLDNLYDAFLKLADKKGQVFDYDLEALAFIGKQQEEPEHFRLDYFSVQSGSNDIATAAVKLACGEEVKAEAANGNGPVDAVYQAINRITDYNVELVKYSLTAKGHGKDALGQVDIVANYNGRRFHGVGLATDIVESSAKAMVHVLNNIWRAAEVEKELQRKAQHNENNKETV</sequence>
<reference key="1">
    <citation type="journal article" date="2009" name="PLoS Genet.">
        <title>Organised genome dynamics in the Escherichia coli species results in highly diverse adaptive paths.</title>
        <authorList>
            <person name="Touchon M."/>
            <person name="Hoede C."/>
            <person name="Tenaillon O."/>
            <person name="Barbe V."/>
            <person name="Baeriswyl S."/>
            <person name="Bidet P."/>
            <person name="Bingen E."/>
            <person name="Bonacorsi S."/>
            <person name="Bouchier C."/>
            <person name="Bouvet O."/>
            <person name="Calteau A."/>
            <person name="Chiapello H."/>
            <person name="Clermont O."/>
            <person name="Cruveiller S."/>
            <person name="Danchin A."/>
            <person name="Diard M."/>
            <person name="Dossat C."/>
            <person name="Karoui M.E."/>
            <person name="Frapy E."/>
            <person name="Garry L."/>
            <person name="Ghigo J.M."/>
            <person name="Gilles A.M."/>
            <person name="Johnson J."/>
            <person name="Le Bouguenec C."/>
            <person name="Lescat M."/>
            <person name="Mangenot S."/>
            <person name="Martinez-Jehanne V."/>
            <person name="Matic I."/>
            <person name="Nassif X."/>
            <person name="Oztas S."/>
            <person name="Petit M.A."/>
            <person name="Pichon C."/>
            <person name="Rouy Z."/>
            <person name="Ruf C.S."/>
            <person name="Schneider D."/>
            <person name="Tourret J."/>
            <person name="Vacherie B."/>
            <person name="Vallenet D."/>
            <person name="Medigue C."/>
            <person name="Rocha E.P.C."/>
            <person name="Denamur E."/>
        </authorList>
    </citation>
    <scope>NUCLEOTIDE SEQUENCE [LARGE SCALE GENOMIC DNA]</scope>
    <source>
        <strain>IAI39 / ExPEC</strain>
    </source>
</reference>
<protein>
    <recommendedName>
        <fullName evidence="1">2-isopropylmalate synthase</fullName>
        <ecNumber evidence="1">2.3.3.13</ecNumber>
    </recommendedName>
    <alternativeName>
        <fullName evidence="1">Alpha-IPM synthase</fullName>
    </alternativeName>
    <alternativeName>
        <fullName evidence="1">Alpha-isopropylmalate synthase</fullName>
    </alternativeName>
</protein>
<keyword id="KW-0028">Amino-acid biosynthesis</keyword>
<keyword id="KW-0100">Branched-chain amino acid biosynthesis</keyword>
<keyword id="KW-0963">Cytoplasm</keyword>
<keyword id="KW-0432">Leucine biosynthesis</keyword>
<keyword id="KW-0464">Manganese</keyword>
<keyword id="KW-0479">Metal-binding</keyword>
<keyword id="KW-0808">Transferase</keyword>
<comment type="function">
    <text evidence="1">Catalyzes the condensation of the acetyl group of acetyl-CoA with 3-methyl-2-oxobutanoate (2-ketoisovalerate) to form 3-carboxy-3-hydroxy-4-methylpentanoate (2-isopropylmalate).</text>
</comment>
<comment type="catalytic activity">
    <reaction evidence="1">
        <text>3-methyl-2-oxobutanoate + acetyl-CoA + H2O = (2S)-2-isopropylmalate + CoA + H(+)</text>
        <dbReference type="Rhea" id="RHEA:21524"/>
        <dbReference type="ChEBI" id="CHEBI:1178"/>
        <dbReference type="ChEBI" id="CHEBI:11851"/>
        <dbReference type="ChEBI" id="CHEBI:15377"/>
        <dbReference type="ChEBI" id="CHEBI:15378"/>
        <dbReference type="ChEBI" id="CHEBI:57287"/>
        <dbReference type="ChEBI" id="CHEBI:57288"/>
        <dbReference type="EC" id="2.3.3.13"/>
    </reaction>
</comment>
<comment type="cofactor">
    <cofactor evidence="1">
        <name>Mn(2+)</name>
        <dbReference type="ChEBI" id="CHEBI:29035"/>
    </cofactor>
</comment>
<comment type="pathway">
    <text evidence="1">Amino-acid biosynthesis; L-leucine biosynthesis; L-leucine from 3-methyl-2-oxobutanoate: step 1/4.</text>
</comment>
<comment type="subunit">
    <text evidence="1">Homodimer.</text>
</comment>
<comment type="subcellular location">
    <subcellularLocation>
        <location evidence="1">Cytoplasm</location>
    </subcellularLocation>
</comment>
<comment type="similarity">
    <text evidence="1">Belongs to the alpha-IPM synthase/homocitrate synthase family. LeuA type 1 subfamily.</text>
</comment>
<evidence type="ECO:0000255" key="1">
    <source>
        <dbReference type="HAMAP-Rule" id="MF_01025"/>
    </source>
</evidence>
<feature type="chain" id="PRO_1000149187" description="2-isopropylmalate synthase">
    <location>
        <begin position="1"/>
        <end position="523"/>
    </location>
</feature>
<feature type="domain" description="Pyruvate carboxyltransferase" evidence="1">
    <location>
        <begin position="5"/>
        <end position="267"/>
    </location>
</feature>
<feature type="region of interest" description="Regulatory domain" evidence="1">
    <location>
        <begin position="392"/>
        <end position="523"/>
    </location>
</feature>
<feature type="binding site" evidence="1">
    <location>
        <position position="14"/>
    </location>
    <ligand>
        <name>Mn(2+)</name>
        <dbReference type="ChEBI" id="CHEBI:29035"/>
    </ligand>
</feature>
<feature type="binding site" evidence="1">
    <location>
        <position position="202"/>
    </location>
    <ligand>
        <name>Mn(2+)</name>
        <dbReference type="ChEBI" id="CHEBI:29035"/>
    </ligand>
</feature>
<feature type="binding site" evidence="1">
    <location>
        <position position="204"/>
    </location>
    <ligand>
        <name>Mn(2+)</name>
        <dbReference type="ChEBI" id="CHEBI:29035"/>
    </ligand>
</feature>
<feature type="binding site" evidence="1">
    <location>
        <position position="238"/>
    </location>
    <ligand>
        <name>Mn(2+)</name>
        <dbReference type="ChEBI" id="CHEBI:29035"/>
    </ligand>
</feature>
<accession>B7NHI2</accession>
<name>LEU1_ECO7I</name>
<organism>
    <name type="scientific">Escherichia coli O7:K1 (strain IAI39 / ExPEC)</name>
    <dbReference type="NCBI Taxonomy" id="585057"/>
    <lineage>
        <taxon>Bacteria</taxon>
        <taxon>Pseudomonadati</taxon>
        <taxon>Pseudomonadota</taxon>
        <taxon>Gammaproteobacteria</taxon>
        <taxon>Enterobacterales</taxon>
        <taxon>Enterobacteriaceae</taxon>
        <taxon>Escherichia</taxon>
    </lineage>
</organism>
<dbReference type="EC" id="2.3.3.13" evidence="1"/>
<dbReference type="EMBL" id="CU928164">
    <property type="protein sequence ID" value="CAR16220.1"/>
    <property type="molecule type" value="Genomic_DNA"/>
</dbReference>
<dbReference type="RefSeq" id="WP_000082846.1">
    <property type="nucleotide sequence ID" value="NC_011750.1"/>
</dbReference>
<dbReference type="RefSeq" id="YP_002406127.1">
    <property type="nucleotide sequence ID" value="NC_011750.1"/>
</dbReference>
<dbReference type="SMR" id="B7NHI2"/>
<dbReference type="STRING" id="585057.ECIAI39_0079"/>
<dbReference type="GeneID" id="75202109"/>
<dbReference type="KEGG" id="ect:ECIAI39_0079"/>
<dbReference type="PATRIC" id="fig|585057.6.peg.86"/>
<dbReference type="HOGENOM" id="CLU_022158_0_1_6"/>
<dbReference type="UniPathway" id="UPA00048">
    <property type="reaction ID" value="UER00070"/>
</dbReference>
<dbReference type="Proteomes" id="UP000000749">
    <property type="component" value="Chromosome"/>
</dbReference>
<dbReference type="GO" id="GO:0005829">
    <property type="term" value="C:cytosol"/>
    <property type="evidence" value="ECO:0007669"/>
    <property type="project" value="TreeGrafter"/>
</dbReference>
<dbReference type="GO" id="GO:0003852">
    <property type="term" value="F:2-isopropylmalate synthase activity"/>
    <property type="evidence" value="ECO:0007669"/>
    <property type="project" value="UniProtKB-UniRule"/>
</dbReference>
<dbReference type="GO" id="GO:0003985">
    <property type="term" value="F:acetyl-CoA C-acetyltransferase activity"/>
    <property type="evidence" value="ECO:0007669"/>
    <property type="project" value="UniProtKB-UniRule"/>
</dbReference>
<dbReference type="GO" id="GO:0030145">
    <property type="term" value="F:manganese ion binding"/>
    <property type="evidence" value="ECO:0007669"/>
    <property type="project" value="UniProtKB-UniRule"/>
</dbReference>
<dbReference type="GO" id="GO:0009098">
    <property type="term" value="P:L-leucine biosynthetic process"/>
    <property type="evidence" value="ECO:0007669"/>
    <property type="project" value="UniProtKB-UniRule"/>
</dbReference>
<dbReference type="CDD" id="cd07940">
    <property type="entry name" value="DRE_TIM_IPMS"/>
    <property type="match status" value="1"/>
</dbReference>
<dbReference type="FunFam" id="1.10.238.260:FF:000001">
    <property type="entry name" value="2-isopropylmalate synthase"/>
    <property type="match status" value="1"/>
</dbReference>
<dbReference type="FunFam" id="3.20.20.70:FF:000010">
    <property type="entry name" value="2-isopropylmalate synthase"/>
    <property type="match status" value="1"/>
</dbReference>
<dbReference type="FunFam" id="3.30.160.270:FF:000001">
    <property type="entry name" value="2-isopropylmalate synthase"/>
    <property type="match status" value="1"/>
</dbReference>
<dbReference type="Gene3D" id="1.10.238.260">
    <property type="match status" value="1"/>
</dbReference>
<dbReference type="Gene3D" id="3.30.160.270">
    <property type="match status" value="1"/>
</dbReference>
<dbReference type="Gene3D" id="3.20.20.70">
    <property type="entry name" value="Aldolase class I"/>
    <property type="match status" value="1"/>
</dbReference>
<dbReference type="HAMAP" id="MF_01025">
    <property type="entry name" value="LeuA_type1"/>
    <property type="match status" value="1"/>
</dbReference>
<dbReference type="InterPro" id="IPR050073">
    <property type="entry name" value="2-IPM_HCS-like"/>
</dbReference>
<dbReference type="InterPro" id="IPR013709">
    <property type="entry name" value="2-isopropylmalate_synth_dimer"/>
</dbReference>
<dbReference type="InterPro" id="IPR002034">
    <property type="entry name" value="AIPM/Hcit_synth_CS"/>
</dbReference>
<dbReference type="InterPro" id="IPR013785">
    <property type="entry name" value="Aldolase_TIM"/>
</dbReference>
<dbReference type="InterPro" id="IPR054691">
    <property type="entry name" value="LeuA/HCS_post-cat"/>
</dbReference>
<dbReference type="InterPro" id="IPR036230">
    <property type="entry name" value="LeuA_allosteric_dom_sf"/>
</dbReference>
<dbReference type="InterPro" id="IPR005671">
    <property type="entry name" value="LeuA_bact_synth"/>
</dbReference>
<dbReference type="InterPro" id="IPR000891">
    <property type="entry name" value="PYR_CT"/>
</dbReference>
<dbReference type="NCBIfam" id="TIGR00973">
    <property type="entry name" value="leuA_bact"/>
    <property type="match status" value="1"/>
</dbReference>
<dbReference type="NCBIfam" id="NF002084">
    <property type="entry name" value="PRK00915.1-1"/>
    <property type="match status" value="1"/>
</dbReference>
<dbReference type="NCBIfam" id="NF002086">
    <property type="entry name" value="PRK00915.1-3"/>
    <property type="match status" value="1"/>
</dbReference>
<dbReference type="PANTHER" id="PTHR10277:SF9">
    <property type="entry name" value="2-ISOPROPYLMALATE SYNTHASE 1, CHLOROPLASTIC-RELATED"/>
    <property type="match status" value="1"/>
</dbReference>
<dbReference type="PANTHER" id="PTHR10277">
    <property type="entry name" value="HOMOCITRATE SYNTHASE-RELATED"/>
    <property type="match status" value="1"/>
</dbReference>
<dbReference type="Pfam" id="PF22617">
    <property type="entry name" value="HCS_D2"/>
    <property type="match status" value="1"/>
</dbReference>
<dbReference type="Pfam" id="PF00682">
    <property type="entry name" value="HMGL-like"/>
    <property type="match status" value="1"/>
</dbReference>
<dbReference type="Pfam" id="PF08502">
    <property type="entry name" value="LeuA_dimer"/>
    <property type="match status" value="1"/>
</dbReference>
<dbReference type="SMART" id="SM00917">
    <property type="entry name" value="LeuA_dimer"/>
    <property type="match status" value="1"/>
</dbReference>
<dbReference type="SUPFAM" id="SSF110921">
    <property type="entry name" value="2-isopropylmalate synthase LeuA, allosteric (dimerisation) domain"/>
    <property type="match status" value="1"/>
</dbReference>
<dbReference type="SUPFAM" id="SSF51569">
    <property type="entry name" value="Aldolase"/>
    <property type="match status" value="1"/>
</dbReference>
<dbReference type="PROSITE" id="PS00815">
    <property type="entry name" value="AIPM_HOMOCIT_SYNTH_1"/>
    <property type="match status" value="1"/>
</dbReference>
<dbReference type="PROSITE" id="PS00816">
    <property type="entry name" value="AIPM_HOMOCIT_SYNTH_2"/>
    <property type="match status" value="1"/>
</dbReference>
<dbReference type="PROSITE" id="PS50991">
    <property type="entry name" value="PYR_CT"/>
    <property type="match status" value="1"/>
</dbReference>
<gene>
    <name evidence="1" type="primary">leuA</name>
    <name type="ordered locus">ECIAI39_0079</name>
</gene>
<proteinExistence type="inferred from homology"/>